<protein>
    <recommendedName>
        <fullName evidence="1">Ion-translocating oxidoreductase complex subunit E</fullName>
        <ecNumber evidence="1">7.-.-.-</ecNumber>
    </recommendedName>
    <alternativeName>
        <fullName evidence="1">Rsx electron transport complex subunit E</fullName>
    </alternativeName>
</protein>
<reference key="1">
    <citation type="submission" date="2007-11" db="EMBL/GenBank/DDBJ databases">
        <authorList>
            <consortium name="The Salmonella enterica serovar Paratyphi B Genome Sequencing Project"/>
            <person name="McClelland M."/>
            <person name="Sanderson E.K."/>
            <person name="Porwollik S."/>
            <person name="Spieth J."/>
            <person name="Clifton W.S."/>
            <person name="Fulton R."/>
            <person name="Cordes M."/>
            <person name="Wollam A."/>
            <person name="Shah N."/>
            <person name="Pepin K."/>
            <person name="Bhonagiri V."/>
            <person name="Nash W."/>
            <person name="Johnson M."/>
            <person name="Thiruvilangam P."/>
            <person name="Wilson R."/>
        </authorList>
    </citation>
    <scope>NUCLEOTIDE SEQUENCE [LARGE SCALE GENOMIC DNA]</scope>
    <source>
        <strain>ATCC BAA-1250 / SPB7</strain>
    </source>
</reference>
<name>RSXE_SALPB</name>
<proteinExistence type="inferred from homology"/>
<accession>A9N028</accession>
<feature type="chain" id="PRO_1000081264" description="Ion-translocating oxidoreductase complex subunit E">
    <location>
        <begin position="1"/>
        <end position="230"/>
    </location>
</feature>
<feature type="transmembrane region" description="Helical" evidence="1">
    <location>
        <begin position="18"/>
        <end position="38"/>
    </location>
</feature>
<feature type="transmembrane region" description="Helical" evidence="1">
    <location>
        <begin position="39"/>
        <end position="59"/>
    </location>
</feature>
<feature type="transmembrane region" description="Helical" evidence="1">
    <location>
        <begin position="63"/>
        <end position="83"/>
    </location>
</feature>
<feature type="transmembrane region" description="Helical" evidence="1">
    <location>
        <begin position="86"/>
        <end position="106"/>
    </location>
</feature>
<feature type="transmembrane region" description="Helical" evidence="1">
    <location>
        <begin position="125"/>
        <end position="145"/>
    </location>
</feature>
<feature type="transmembrane region" description="Helical" evidence="1">
    <location>
        <begin position="182"/>
        <end position="202"/>
    </location>
</feature>
<keyword id="KW-0997">Cell inner membrane</keyword>
<keyword id="KW-1003">Cell membrane</keyword>
<keyword id="KW-0249">Electron transport</keyword>
<keyword id="KW-0472">Membrane</keyword>
<keyword id="KW-1278">Translocase</keyword>
<keyword id="KW-0812">Transmembrane</keyword>
<keyword id="KW-1133">Transmembrane helix</keyword>
<keyword id="KW-0813">Transport</keyword>
<evidence type="ECO:0000255" key="1">
    <source>
        <dbReference type="HAMAP-Rule" id="MF_00478"/>
    </source>
</evidence>
<organism>
    <name type="scientific">Salmonella paratyphi B (strain ATCC BAA-1250 / SPB7)</name>
    <dbReference type="NCBI Taxonomy" id="1016998"/>
    <lineage>
        <taxon>Bacteria</taxon>
        <taxon>Pseudomonadati</taxon>
        <taxon>Pseudomonadota</taxon>
        <taxon>Gammaproteobacteria</taxon>
        <taxon>Enterobacterales</taxon>
        <taxon>Enterobacteriaceae</taxon>
        <taxon>Salmonella</taxon>
    </lineage>
</organism>
<comment type="function">
    <text evidence="1">Part of a membrane-bound complex that couples electron transfer with translocation of ions across the membrane. Required to maintain the reduced state of SoxR.</text>
</comment>
<comment type="subunit">
    <text evidence="1">The complex is composed of six subunits: RsxA, RsxB, RsxC, RsxD, RsxE and RsxG.</text>
</comment>
<comment type="subcellular location">
    <subcellularLocation>
        <location evidence="1">Cell inner membrane</location>
        <topology evidence="1">Multi-pass membrane protein</topology>
    </subcellularLocation>
</comment>
<comment type="similarity">
    <text evidence="1">Belongs to the NqrDE/RnfAE family.</text>
</comment>
<gene>
    <name evidence="1" type="primary">rsxE</name>
    <name type="ordered locus">SPAB_01866</name>
</gene>
<sequence>MSEIKDIVVQGLWKNNSALVQLLGLCPLLAVTSTATNALGLGLATTLVLTLTNLTVSALRRWTPAEIRIPIYVMIIASVVSAVQMLINAYAFGLYQSLGIFIPLIVTNCIVVGRAEAFAAKKGPWLSALDGFSIGMGATGAMFVLGSLREILGNGTLFDGADSLLGGWAKVLRVEIFHTDSPFLLAMLPPGAFIGLGLMLAVKYLIDEKMKKRRAETAPSAVPAGETGKV</sequence>
<dbReference type="EC" id="7.-.-.-" evidence="1"/>
<dbReference type="EMBL" id="CP000886">
    <property type="protein sequence ID" value="ABX67259.1"/>
    <property type="molecule type" value="Genomic_DNA"/>
</dbReference>
<dbReference type="RefSeq" id="WP_001289628.1">
    <property type="nucleotide sequence ID" value="NC_010102.1"/>
</dbReference>
<dbReference type="SMR" id="A9N028"/>
<dbReference type="KEGG" id="spq:SPAB_01866"/>
<dbReference type="PATRIC" id="fig|1016998.12.peg.1758"/>
<dbReference type="HOGENOM" id="CLU_046659_1_0_6"/>
<dbReference type="BioCyc" id="SENT1016998:SPAB_RS07575-MONOMER"/>
<dbReference type="Proteomes" id="UP000008556">
    <property type="component" value="Chromosome"/>
</dbReference>
<dbReference type="GO" id="GO:0005886">
    <property type="term" value="C:plasma membrane"/>
    <property type="evidence" value="ECO:0007669"/>
    <property type="project" value="UniProtKB-SubCell"/>
</dbReference>
<dbReference type="GO" id="GO:0022900">
    <property type="term" value="P:electron transport chain"/>
    <property type="evidence" value="ECO:0007669"/>
    <property type="project" value="UniProtKB-UniRule"/>
</dbReference>
<dbReference type="HAMAP" id="MF_00478">
    <property type="entry name" value="RsxE_RnfE"/>
    <property type="match status" value="1"/>
</dbReference>
<dbReference type="InterPro" id="IPR003667">
    <property type="entry name" value="NqrDE/RnfAE"/>
</dbReference>
<dbReference type="InterPro" id="IPR010968">
    <property type="entry name" value="RnfE"/>
</dbReference>
<dbReference type="NCBIfam" id="NF009070">
    <property type="entry name" value="PRK12405.1"/>
    <property type="match status" value="1"/>
</dbReference>
<dbReference type="NCBIfam" id="TIGR01948">
    <property type="entry name" value="rnfE"/>
    <property type="match status" value="1"/>
</dbReference>
<dbReference type="PANTHER" id="PTHR30586">
    <property type="entry name" value="ELECTRON TRANSPORT COMPLEX PROTEIN RNFE"/>
    <property type="match status" value="1"/>
</dbReference>
<dbReference type="PANTHER" id="PTHR30586:SF0">
    <property type="entry name" value="ION-TRANSLOCATING OXIDOREDUCTASE COMPLEX SUBUNIT E"/>
    <property type="match status" value="1"/>
</dbReference>
<dbReference type="Pfam" id="PF02508">
    <property type="entry name" value="Rnf-Nqr"/>
    <property type="match status" value="1"/>
</dbReference>
<dbReference type="PIRSF" id="PIRSF006102">
    <property type="entry name" value="NQR_DE"/>
    <property type="match status" value="1"/>
</dbReference>